<protein>
    <recommendedName>
        <fullName>ERI1 exoribonuclease 2</fullName>
        <ecNumber>3.1.-.-</ecNumber>
    </recommendedName>
    <alternativeName>
        <fullName>Exonuclease domain-containing protein 1</fullName>
    </alternativeName>
</protein>
<gene>
    <name type="primary">eri2</name>
    <name type="synonym">exod1</name>
</gene>
<organism>
    <name type="scientific">Xenopus laevis</name>
    <name type="common">African clawed frog</name>
    <dbReference type="NCBI Taxonomy" id="8355"/>
    <lineage>
        <taxon>Eukaryota</taxon>
        <taxon>Metazoa</taxon>
        <taxon>Chordata</taxon>
        <taxon>Craniata</taxon>
        <taxon>Vertebrata</taxon>
        <taxon>Euteleostomi</taxon>
        <taxon>Amphibia</taxon>
        <taxon>Batrachia</taxon>
        <taxon>Anura</taxon>
        <taxon>Pipoidea</taxon>
        <taxon>Pipidae</taxon>
        <taxon>Xenopodinae</taxon>
        <taxon>Xenopus</taxon>
        <taxon>Xenopus</taxon>
    </lineage>
</organism>
<name>ERI2_XENLA</name>
<sequence length="687" mass="75840">MATKQLAKQLGLIRRSSKTSQTSSNVSRPKARQFFEYLIIIDFESTCWKDGKHSTQEIIEFPAVLLNVSNGEIESEFHTYVQPQEHPILSDFCTELTGINQQQVDDGVPLKICLSQFNSWIQKLQKEKGIAFVTAVPTHSTAEHKMCAFVTWSDWDLGVCLLYECRRKQMKKPDILNSWIDLRATYKLFYNRRPKGLNGALQDLGIEFSGREHSGLDDSRNTAKLASRMICDGCVMKITKSLDKVNHKISYTRPQQVLPAQDSNSVQVGTIQTSEMHSEKNPQPSFDKTAACVNVMNLQKDLEPSSLKINGKPIGRDKAVTMLNGHQGQESLPSQTLINGLSTTLGNGPKRCFTNRTSLGTLQTGVSLGAFTSTPAELPSLGSGHVLMSTTVTSVTDISALDISSTSDCLSMLADWEDAAVIEDSQEEPSVPTTEQSDLLMAQTSVDVTLPGTNMANCNRNQKYGSFHPHSIAYQSRNTTIYNINVKQNVSSCSTFKVPGVLARRSTNMMPTSAQLNKMSTSLPSFPKRKLSSVSFYSPPKKQPFIIHEDKCSSNNRSLPVISSRPHNVPPTVLNATVNNTFKSAQTGKITAPMCNCGRRAKRLTVSNAGPNQGKAFYTCSVKKRNEENKKGCDYFKWEQTVVKEKSAQSTIILSKSGISFSSNTSFTAANSASRRSFVSLRPSMRT</sequence>
<dbReference type="EC" id="3.1.-.-"/>
<dbReference type="EMBL" id="BC088972">
    <property type="protein sequence ID" value="AAH88972.1"/>
    <property type="molecule type" value="mRNA"/>
</dbReference>
<dbReference type="RefSeq" id="NP_001089039.1">
    <property type="nucleotide sequence ID" value="NM_001095570.1"/>
</dbReference>
<dbReference type="SMR" id="Q5HZL1"/>
<dbReference type="DNASU" id="503681"/>
<dbReference type="GeneID" id="503681"/>
<dbReference type="KEGG" id="xla:503681"/>
<dbReference type="AGR" id="Xenbase:XB-GENE-970831"/>
<dbReference type="CTD" id="503681"/>
<dbReference type="Xenbase" id="XB-GENE-970831">
    <property type="gene designation" value="eri2.L"/>
</dbReference>
<dbReference type="OrthoDB" id="448399at2759"/>
<dbReference type="Proteomes" id="UP000186698">
    <property type="component" value="Chromosome 9_10L"/>
</dbReference>
<dbReference type="Bgee" id="503681">
    <property type="expression patterns" value="Expressed in egg cell and 19 other cell types or tissues"/>
</dbReference>
<dbReference type="GO" id="GO:0000175">
    <property type="term" value="F:3'-5'-RNA exonuclease activity"/>
    <property type="evidence" value="ECO:0000318"/>
    <property type="project" value="GO_Central"/>
</dbReference>
<dbReference type="GO" id="GO:0003676">
    <property type="term" value="F:nucleic acid binding"/>
    <property type="evidence" value="ECO:0007669"/>
    <property type="project" value="InterPro"/>
</dbReference>
<dbReference type="GO" id="GO:0008270">
    <property type="term" value="F:zinc ion binding"/>
    <property type="evidence" value="ECO:0007669"/>
    <property type="project" value="UniProtKB-KW"/>
</dbReference>
<dbReference type="CDD" id="cd06133">
    <property type="entry name" value="ERI-1_3'hExo_like"/>
    <property type="match status" value="1"/>
</dbReference>
<dbReference type="FunFam" id="3.30.420.10:FF:000062">
    <property type="entry name" value="ERI1 exoribonuclease 2 isoform X1"/>
    <property type="match status" value="1"/>
</dbReference>
<dbReference type="Gene3D" id="3.30.420.10">
    <property type="entry name" value="Ribonuclease H-like superfamily/Ribonuclease H"/>
    <property type="match status" value="1"/>
</dbReference>
<dbReference type="InterPro" id="IPR051274">
    <property type="entry name" value="3-5_Exoribonuclease"/>
</dbReference>
<dbReference type="InterPro" id="IPR047201">
    <property type="entry name" value="ERI-1_3'hExo-like"/>
</dbReference>
<dbReference type="InterPro" id="IPR013520">
    <property type="entry name" value="Exonuclease_RNaseT/DNA_pol3"/>
</dbReference>
<dbReference type="InterPro" id="IPR012337">
    <property type="entry name" value="RNaseH-like_sf"/>
</dbReference>
<dbReference type="InterPro" id="IPR036397">
    <property type="entry name" value="RNaseH_sf"/>
</dbReference>
<dbReference type="InterPro" id="IPR010666">
    <property type="entry name" value="Znf_GRF"/>
</dbReference>
<dbReference type="PANTHER" id="PTHR23044">
    <property type="entry name" value="3'-5' EXONUCLEASE ERI1-RELATED"/>
    <property type="match status" value="1"/>
</dbReference>
<dbReference type="PANTHER" id="PTHR23044:SF61">
    <property type="entry name" value="3'-5' EXORIBONUCLEASE 1-RELATED"/>
    <property type="match status" value="1"/>
</dbReference>
<dbReference type="Pfam" id="PF00929">
    <property type="entry name" value="RNase_T"/>
    <property type="match status" value="1"/>
</dbReference>
<dbReference type="Pfam" id="PF06839">
    <property type="entry name" value="Zn_ribbon_GRF"/>
    <property type="match status" value="1"/>
</dbReference>
<dbReference type="SMART" id="SM00479">
    <property type="entry name" value="EXOIII"/>
    <property type="match status" value="1"/>
</dbReference>
<dbReference type="SUPFAM" id="SSF53098">
    <property type="entry name" value="Ribonuclease H-like"/>
    <property type="match status" value="1"/>
</dbReference>
<dbReference type="PROSITE" id="PS51999">
    <property type="entry name" value="ZF_GRF"/>
    <property type="match status" value="1"/>
</dbReference>
<evidence type="ECO:0000250" key="1"/>
<evidence type="ECO:0000255" key="2"/>
<evidence type="ECO:0000255" key="3">
    <source>
        <dbReference type="PROSITE-ProRule" id="PRU01343"/>
    </source>
</evidence>
<evidence type="ECO:0000305" key="4"/>
<keyword id="KW-0269">Exonuclease</keyword>
<keyword id="KW-0378">Hydrolase</keyword>
<keyword id="KW-0460">Magnesium</keyword>
<keyword id="KW-0479">Metal-binding</keyword>
<keyword id="KW-0540">Nuclease</keyword>
<keyword id="KW-1185">Reference proteome</keyword>
<keyword id="KW-0862">Zinc</keyword>
<keyword id="KW-0863">Zinc-finger</keyword>
<feature type="chain" id="PRO_0000338976" description="ERI1 exoribonuclease 2">
    <location>
        <begin position="1"/>
        <end position="687"/>
    </location>
</feature>
<feature type="domain" description="Exonuclease">
    <location>
        <begin position="38"/>
        <end position="226"/>
    </location>
</feature>
<feature type="zinc finger region" description="GRF-type" evidence="3">
    <location>
        <begin position="595"/>
        <end position="642"/>
    </location>
</feature>
<feature type="active site" description="Proton acceptor" evidence="2">
    <location>
        <position position="44"/>
    </location>
</feature>
<feature type="active site" description="Proton acceptor" evidence="2">
    <location>
        <position position="213"/>
    </location>
</feature>
<feature type="binding site" evidence="1">
    <location>
        <position position="42"/>
    </location>
    <ligand>
        <name>Mg(2+)</name>
        <dbReference type="ChEBI" id="CHEBI:18420"/>
        <label>1</label>
    </ligand>
</feature>
<feature type="binding site" evidence="1">
    <location>
        <position position="42"/>
    </location>
    <ligand>
        <name>Mg(2+)</name>
        <dbReference type="ChEBI" id="CHEBI:18420"/>
        <label>2</label>
    </ligand>
</feature>
<feature type="binding site" evidence="1">
    <location>
        <position position="44"/>
    </location>
    <ligand>
        <name>AMP</name>
        <dbReference type="ChEBI" id="CHEBI:456215"/>
    </ligand>
</feature>
<feature type="binding site" evidence="1">
    <location>
        <position position="44"/>
    </location>
    <ligand>
        <name>Mg(2+)</name>
        <dbReference type="ChEBI" id="CHEBI:18420"/>
        <label>1</label>
    </ligand>
</feature>
<feature type="binding site" evidence="1">
    <location>
        <position position="156"/>
    </location>
    <ligand>
        <name>Mg(2+)</name>
        <dbReference type="ChEBI" id="CHEBI:18420"/>
        <label>2</label>
    </ligand>
</feature>
<feature type="binding site" evidence="1">
    <location>
        <position position="213"/>
    </location>
    <ligand>
        <name>AMP</name>
        <dbReference type="ChEBI" id="CHEBI:456215"/>
    </ligand>
</feature>
<feature type="binding site" evidence="1">
    <location>
        <position position="218"/>
    </location>
    <ligand>
        <name>Mg(2+)</name>
        <dbReference type="ChEBI" id="CHEBI:18420"/>
        <label>1</label>
    </ligand>
</feature>
<feature type="binding site" evidence="3">
    <location>
        <position position="595"/>
    </location>
    <ligand>
        <name>Zn(2+)</name>
        <dbReference type="ChEBI" id="CHEBI:29105"/>
    </ligand>
</feature>
<feature type="binding site" evidence="3">
    <location>
        <position position="597"/>
    </location>
    <ligand>
        <name>Zn(2+)</name>
        <dbReference type="ChEBI" id="CHEBI:29105"/>
    </ligand>
</feature>
<feature type="binding site" evidence="3">
    <location>
        <position position="620"/>
    </location>
    <ligand>
        <name>Zn(2+)</name>
        <dbReference type="ChEBI" id="CHEBI:29105"/>
    </ligand>
</feature>
<feature type="binding site" evidence="3">
    <location>
        <position position="633"/>
    </location>
    <ligand>
        <name>Zn(2+)</name>
        <dbReference type="ChEBI" id="CHEBI:29105"/>
    </ligand>
</feature>
<reference key="1">
    <citation type="submission" date="2005-01" db="EMBL/GenBank/DDBJ databases">
        <authorList>
            <consortium name="NIH - Xenopus Gene Collection (XGC) project"/>
        </authorList>
    </citation>
    <scope>NUCLEOTIDE SEQUENCE [LARGE SCALE MRNA]</scope>
    <source>
        <tissue>Egg</tissue>
    </source>
</reference>
<accession>Q5HZL1</accession>
<proteinExistence type="evidence at transcript level"/>
<comment type="cofactor">
    <cofactor evidence="1">
        <name>Mg(2+)</name>
        <dbReference type="ChEBI" id="CHEBI:18420"/>
    </cofactor>
    <text evidence="1">Binds 2 magnesium ions per subunit.</text>
</comment>
<comment type="similarity">
    <text evidence="4">Belongs to the ERI2 family.</text>
</comment>